<proteinExistence type="evidence at protein level"/>
<gene>
    <name type="primary">actP</name>
    <name type="synonym">yjcG</name>
    <name type="ordered locus">b4067</name>
    <name type="ordered locus">JW4028</name>
</gene>
<keyword id="KW-0997">Cell inner membrane</keyword>
<keyword id="KW-1003">Cell membrane</keyword>
<keyword id="KW-0406">Ion transport</keyword>
<keyword id="KW-0472">Membrane</keyword>
<keyword id="KW-1185">Reference proteome</keyword>
<keyword id="KW-0915">Sodium</keyword>
<keyword id="KW-0739">Sodium transport</keyword>
<keyword id="KW-0769">Symport</keyword>
<keyword id="KW-0812">Transmembrane</keyword>
<keyword id="KW-1133">Transmembrane helix</keyword>
<keyword id="KW-0813">Transport</keyword>
<protein>
    <recommendedName>
        <fullName>Cation/acetate symporter ActP</fullName>
    </recommendedName>
    <alternativeName>
        <fullName>Acetate permease</fullName>
    </alternativeName>
    <alternativeName>
        <fullName>Acetate transporter ActP</fullName>
    </alternativeName>
</protein>
<feature type="chain" id="PRO_0000105407" description="Cation/acetate symporter ActP">
    <location>
        <begin position="1"/>
        <end position="549"/>
    </location>
</feature>
<feature type="topological domain" description="Periplasmic" evidence="1">
    <location>
        <begin position="1"/>
        <end position="32"/>
    </location>
</feature>
<feature type="transmembrane region" description="Helical" evidence="1">
    <location>
        <begin position="33"/>
        <end position="55"/>
    </location>
</feature>
<feature type="topological domain" description="Cytoplasmic" evidence="1">
    <location>
        <begin position="56"/>
        <end position="75"/>
    </location>
</feature>
<feature type="transmembrane region" description="Helical" evidence="1">
    <location>
        <begin position="76"/>
        <end position="98"/>
    </location>
</feature>
<feature type="topological domain" description="Periplasmic" evidence="1">
    <location>
        <begin position="99"/>
        <end position="102"/>
    </location>
</feature>
<feature type="transmembrane region" description="Helical" evidence="1">
    <location>
        <begin position="103"/>
        <end position="125"/>
    </location>
</feature>
<feature type="topological domain" description="Cytoplasmic" evidence="1">
    <location>
        <begin position="126"/>
        <end position="145"/>
    </location>
</feature>
<feature type="transmembrane region" description="Helical" evidence="1">
    <location>
        <begin position="146"/>
        <end position="168"/>
    </location>
</feature>
<feature type="topological domain" description="Periplasmic" evidence="1">
    <location>
        <begin position="169"/>
        <end position="182"/>
    </location>
</feature>
<feature type="transmembrane region" description="Helical" evidence="1">
    <location>
        <begin position="183"/>
        <end position="205"/>
    </location>
</feature>
<feature type="topological domain" description="Cytoplasmic" evidence="1">
    <location>
        <begin position="206"/>
        <end position="211"/>
    </location>
</feature>
<feature type="transmembrane region" description="Helical" evidence="1">
    <location>
        <begin position="212"/>
        <end position="234"/>
    </location>
</feature>
<feature type="topological domain" description="Periplasmic" evidence="1">
    <location>
        <begin position="235"/>
        <end position="260"/>
    </location>
</feature>
<feature type="transmembrane region" description="Helical" evidence="1">
    <location>
        <begin position="261"/>
        <end position="283"/>
    </location>
</feature>
<feature type="topological domain" description="Cytoplasmic" evidence="1">
    <location>
        <begin position="284"/>
        <end position="302"/>
    </location>
</feature>
<feature type="transmembrane region" description="Helical" evidence="1">
    <location>
        <begin position="303"/>
        <end position="325"/>
    </location>
</feature>
<feature type="topological domain" description="Periplasmic" evidence="1">
    <location>
        <begin position="326"/>
        <end position="358"/>
    </location>
</feature>
<feature type="transmembrane region" description="Helical" evidence="1">
    <location>
        <begin position="359"/>
        <end position="381"/>
    </location>
</feature>
<feature type="topological domain" description="Cytoplasmic" evidence="1">
    <location>
        <begin position="382"/>
        <end position="401"/>
    </location>
</feature>
<feature type="transmembrane region" description="Helical" evidence="1">
    <location>
        <begin position="402"/>
        <end position="424"/>
    </location>
</feature>
<feature type="topological domain" description="Periplasmic" evidence="1">
    <location>
        <begin position="425"/>
        <end position="427"/>
    </location>
</feature>
<feature type="transmembrane region" description="Helical" evidence="1">
    <location>
        <begin position="428"/>
        <end position="450"/>
    </location>
</feature>
<feature type="topological domain" description="Cytoplasmic" evidence="1">
    <location>
        <begin position="451"/>
        <end position="461"/>
    </location>
</feature>
<feature type="transmembrane region" description="Helical" evidence="1">
    <location>
        <begin position="462"/>
        <end position="484"/>
    </location>
</feature>
<feature type="topological domain" description="Periplasmic" evidence="1">
    <location>
        <begin position="485"/>
        <end position="493"/>
    </location>
</feature>
<feature type="transmembrane region" description="Helical" evidence="1">
    <location>
        <begin position="494"/>
        <end position="516"/>
    </location>
</feature>
<feature type="topological domain" description="Cytoplasmic" evidence="1">
    <location>
        <begin position="517"/>
        <end position="549"/>
    </location>
</feature>
<sequence length="549" mass="59197">MKRVLTALAATLPFAANAADAISGAVERQPTNWQAIIMFLIFVVFTLGITYWASKRVRSRSDYYTAGGNITGFQNGLAIAGDYMSAASFLGISALVFTSGYDGLIYSLGFLVGWPIILFLIAERLRNLGRYTFADVASYRLKQGPIRILSACGSLVVVALYLIAQMVGAGKLIELLFGLNYHIAVVLVGVLMMMYVLFGGMLATTWVQIIKAVLLLFGASFMAFMVMKHVGFSFNNLFSEAMAVHPKGVDIMKPGGLVKDPISALSLGLGLMFGTAGLPHILMRFFTVSDAREARKSVFYATGFMGYFYILTFIIGFGAIMLVGANPEYKDAAGHLIGGNNMAAVHLANAVGGNLFLGFISAVAFATILAVVAGLTLAGASAVSHDLYANVFKKGATEREELRVSKITVLILGVIAIILGVLFENQNIAFMVGLAFAIAASCNFPIILLSMYWSKLTTRGAMMGGWLGLITAVVLMILGPTIWVQILGHEKAIFPYEYPALFSITVAFLGIWFFSATDNSAEGARERELFRAQFIRSQTGFGVEQGRAH</sequence>
<name>ACTP_ECOLI</name>
<organism>
    <name type="scientific">Escherichia coli (strain K12)</name>
    <dbReference type="NCBI Taxonomy" id="83333"/>
    <lineage>
        <taxon>Bacteria</taxon>
        <taxon>Pseudomonadati</taxon>
        <taxon>Pseudomonadota</taxon>
        <taxon>Gammaproteobacteria</taxon>
        <taxon>Enterobacterales</taxon>
        <taxon>Enterobacteriaceae</taxon>
        <taxon>Escherichia</taxon>
    </lineage>
</organism>
<reference key="1">
    <citation type="journal article" date="1993" name="Nucleic Acids Res.">
        <title>Analysis of the Escherichia coli genome. IV. DNA sequence of the region from 89.2 to 92.8 minutes.</title>
        <authorList>
            <person name="Blattner F.R."/>
            <person name="Burland V.D."/>
            <person name="Plunkett G. III"/>
            <person name="Sofia H.J."/>
            <person name="Daniels D.L."/>
        </authorList>
    </citation>
    <scope>NUCLEOTIDE SEQUENCE [LARGE SCALE GENOMIC DNA]</scope>
    <source>
        <strain>K12 / MG1655 / ATCC 47076</strain>
    </source>
</reference>
<reference key="2">
    <citation type="journal article" date="1997" name="Science">
        <title>The complete genome sequence of Escherichia coli K-12.</title>
        <authorList>
            <person name="Blattner F.R."/>
            <person name="Plunkett G. III"/>
            <person name="Bloch C.A."/>
            <person name="Perna N.T."/>
            <person name="Burland V."/>
            <person name="Riley M."/>
            <person name="Collado-Vides J."/>
            <person name="Glasner J.D."/>
            <person name="Rode C.K."/>
            <person name="Mayhew G.F."/>
            <person name="Gregor J."/>
            <person name="Davis N.W."/>
            <person name="Kirkpatrick H.A."/>
            <person name="Goeden M.A."/>
            <person name="Rose D.J."/>
            <person name="Mau B."/>
            <person name="Shao Y."/>
        </authorList>
    </citation>
    <scope>NUCLEOTIDE SEQUENCE [LARGE SCALE GENOMIC DNA]</scope>
    <source>
        <strain>K12 / MG1655 / ATCC 47076</strain>
    </source>
</reference>
<reference key="3">
    <citation type="journal article" date="2006" name="Mol. Syst. Biol.">
        <title>Highly accurate genome sequences of Escherichia coli K-12 strains MG1655 and W3110.</title>
        <authorList>
            <person name="Hayashi K."/>
            <person name="Morooka N."/>
            <person name="Yamamoto Y."/>
            <person name="Fujita K."/>
            <person name="Isono K."/>
            <person name="Choi S."/>
            <person name="Ohtsubo E."/>
            <person name="Baba T."/>
            <person name="Wanner B.L."/>
            <person name="Mori H."/>
            <person name="Horiuchi T."/>
        </authorList>
    </citation>
    <scope>NUCLEOTIDE SEQUENCE [LARGE SCALE GENOMIC DNA]</scope>
    <source>
        <strain>K12 / W3110 / ATCC 27325 / DSM 5911</strain>
    </source>
</reference>
<reference key="4">
    <citation type="journal article" date="2003" name="J. Bacteriol.">
        <title>The gene yjcG, cotranscribed with the gene acs, encodes an acetate permease in Escherichia coli.</title>
        <authorList>
            <person name="Gimenez R."/>
            <person name="Nunez M.F."/>
            <person name="Badia J."/>
            <person name="Aguilar J."/>
            <person name="Baldoma L."/>
        </authorList>
    </citation>
    <scope>FUNCTION</scope>
    <scope>BIOPHYSICOCHEMICAL PROPERTIES</scope>
    <source>
        <strain>K12</strain>
    </source>
</reference>
<reference key="5">
    <citation type="journal article" date="2005" name="J. Biol. Chem.">
        <title>Protein complexes of the Escherichia coli cell envelope.</title>
        <authorList>
            <person name="Stenberg F."/>
            <person name="Chovanec P."/>
            <person name="Maslen S.L."/>
            <person name="Robinson C.V."/>
            <person name="Ilag L."/>
            <person name="von Heijne G."/>
            <person name="Daley D.O."/>
        </authorList>
    </citation>
    <scope>SUBUNIT</scope>
    <scope>SUBCELLULAR LOCATION</scope>
    <source>
        <strain>BL21-DE3</strain>
    </source>
</reference>
<reference key="6">
    <citation type="journal article" date="2005" name="Science">
        <title>Global topology analysis of the Escherichia coli inner membrane proteome.</title>
        <authorList>
            <person name="Daley D.O."/>
            <person name="Rapp M."/>
            <person name="Granseth E."/>
            <person name="Melen K."/>
            <person name="Drew D."/>
            <person name="von Heijne G."/>
        </authorList>
    </citation>
    <scope>TOPOLOGY [LARGE SCALE ANALYSIS]</scope>
    <source>
        <strain>K12 / MG1655 / ATCC 47076</strain>
    </source>
</reference>
<dbReference type="EMBL" id="U00006">
    <property type="protein sequence ID" value="AAC43161.1"/>
    <property type="molecule type" value="Genomic_DNA"/>
</dbReference>
<dbReference type="EMBL" id="U00096">
    <property type="protein sequence ID" value="AAC77037.1"/>
    <property type="molecule type" value="Genomic_DNA"/>
</dbReference>
<dbReference type="EMBL" id="AP009048">
    <property type="protein sequence ID" value="BAE78069.1"/>
    <property type="molecule type" value="Genomic_DNA"/>
</dbReference>
<dbReference type="PIR" id="B65215">
    <property type="entry name" value="B65215"/>
</dbReference>
<dbReference type="RefSeq" id="NP_418491.1">
    <property type="nucleotide sequence ID" value="NC_000913.3"/>
</dbReference>
<dbReference type="RefSeq" id="WP_000832573.1">
    <property type="nucleotide sequence ID" value="NZ_SSZK01000016.1"/>
</dbReference>
<dbReference type="SMR" id="P32705"/>
<dbReference type="BioGRID" id="4259431">
    <property type="interactions" value="12"/>
</dbReference>
<dbReference type="DIP" id="DIP-12552N"/>
<dbReference type="FunCoup" id="P32705">
    <property type="interactions" value="317"/>
</dbReference>
<dbReference type="IntAct" id="P32705">
    <property type="interactions" value="1"/>
</dbReference>
<dbReference type="STRING" id="511145.b4067"/>
<dbReference type="TCDB" id="2.A.21.7.2">
    <property type="family name" value="the solute:sodium symporter (sss) family"/>
</dbReference>
<dbReference type="jPOST" id="P32705"/>
<dbReference type="PaxDb" id="511145-b4067"/>
<dbReference type="EnsemblBacteria" id="AAC77037">
    <property type="protein sequence ID" value="AAC77037"/>
    <property type="gene ID" value="b4067"/>
</dbReference>
<dbReference type="GeneID" id="948575"/>
<dbReference type="KEGG" id="ecj:JW4028"/>
<dbReference type="KEGG" id="eco:b4067"/>
<dbReference type="KEGG" id="ecoc:C3026_21975"/>
<dbReference type="PATRIC" id="fig|1411691.4.peg.2637"/>
<dbReference type="EchoBASE" id="EB1886"/>
<dbReference type="eggNOG" id="COG4147">
    <property type="taxonomic scope" value="Bacteria"/>
</dbReference>
<dbReference type="HOGENOM" id="CLU_018808_8_3_6"/>
<dbReference type="InParanoid" id="P32705"/>
<dbReference type="OMA" id="GTTWVQM"/>
<dbReference type="OrthoDB" id="9764416at2"/>
<dbReference type="PhylomeDB" id="P32705"/>
<dbReference type="BioCyc" id="EcoCyc:YJCG-MONOMER"/>
<dbReference type="BioCyc" id="MetaCyc:YJCG-MONOMER"/>
<dbReference type="PHI-base" id="PHI:9229"/>
<dbReference type="PRO" id="PR:P32705"/>
<dbReference type="Proteomes" id="UP000000625">
    <property type="component" value="Chromosome"/>
</dbReference>
<dbReference type="GO" id="GO:0005886">
    <property type="term" value="C:plasma membrane"/>
    <property type="evidence" value="ECO:0000314"/>
    <property type="project" value="EcoCyc"/>
</dbReference>
<dbReference type="GO" id="GO:0015123">
    <property type="term" value="F:acetate transmembrane transporter activity"/>
    <property type="evidence" value="ECO:0000314"/>
    <property type="project" value="EcoCyc"/>
</dbReference>
<dbReference type="GO" id="GO:0043879">
    <property type="term" value="F:glycolate transmembrane transporter activity"/>
    <property type="evidence" value="ECO:0000269"/>
    <property type="project" value="EcoCyc"/>
</dbReference>
<dbReference type="GO" id="GO:0015293">
    <property type="term" value="F:symporter activity"/>
    <property type="evidence" value="ECO:0007669"/>
    <property type="project" value="UniProtKB-KW"/>
</dbReference>
<dbReference type="GO" id="GO:0015654">
    <property type="term" value="F:tellurite transmembrane transporter activity"/>
    <property type="evidence" value="ECO:0000314"/>
    <property type="project" value="EcoCyc"/>
</dbReference>
<dbReference type="GO" id="GO:0006847">
    <property type="term" value="P:plasma membrane acetate transport"/>
    <property type="evidence" value="ECO:0000314"/>
    <property type="project" value="EcoCyc"/>
</dbReference>
<dbReference type="GO" id="GO:0006814">
    <property type="term" value="P:sodium ion transport"/>
    <property type="evidence" value="ECO:0007669"/>
    <property type="project" value="UniProtKB-KW"/>
</dbReference>
<dbReference type="GO" id="GO:0015710">
    <property type="term" value="P:tellurite transport"/>
    <property type="evidence" value="ECO:0000315"/>
    <property type="project" value="EcoCyc"/>
</dbReference>
<dbReference type="CDD" id="cd11480">
    <property type="entry name" value="SLC5sbd_u4"/>
    <property type="match status" value="1"/>
</dbReference>
<dbReference type="FunFam" id="1.20.1730.10:FF:000001">
    <property type="entry name" value="Cation/acetate symporter ActP"/>
    <property type="match status" value="1"/>
</dbReference>
<dbReference type="Gene3D" id="1.20.1730.10">
    <property type="entry name" value="Sodium/glucose cotransporter"/>
    <property type="match status" value="1"/>
</dbReference>
<dbReference type="HAMAP" id="MF_01426">
    <property type="entry name" value="Acet_symport_ActP"/>
    <property type="match status" value="1"/>
</dbReference>
<dbReference type="InterPro" id="IPR014083">
    <property type="entry name" value="Cation/Ac_symporter_ActP"/>
</dbReference>
<dbReference type="InterPro" id="IPR038377">
    <property type="entry name" value="Na/Glc_symporter_sf"/>
</dbReference>
<dbReference type="InterPro" id="IPR001734">
    <property type="entry name" value="Na/solute_symporter"/>
</dbReference>
<dbReference type="InterPro" id="IPR018212">
    <property type="entry name" value="Na/solute_symporter_CS"/>
</dbReference>
<dbReference type="InterPro" id="IPR050277">
    <property type="entry name" value="Sodium:Solute_Symporter"/>
</dbReference>
<dbReference type="NCBIfam" id="NF006903">
    <property type="entry name" value="PRK09395.1"/>
    <property type="match status" value="1"/>
</dbReference>
<dbReference type="NCBIfam" id="NF009135">
    <property type="entry name" value="PRK12488.1"/>
    <property type="match status" value="1"/>
</dbReference>
<dbReference type="NCBIfam" id="TIGR00813">
    <property type="entry name" value="sss"/>
    <property type="match status" value="1"/>
</dbReference>
<dbReference type="NCBIfam" id="TIGR02711">
    <property type="entry name" value="symport_actP"/>
    <property type="match status" value="1"/>
</dbReference>
<dbReference type="PANTHER" id="PTHR48086:SF6">
    <property type="entry name" value="CATION_ACETATE SYMPORTER ACTP"/>
    <property type="match status" value="1"/>
</dbReference>
<dbReference type="PANTHER" id="PTHR48086">
    <property type="entry name" value="SODIUM/PROLINE SYMPORTER-RELATED"/>
    <property type="match status" value="1"/>
</dbReference>
<dbReference type="Pfam" id="PF00474">
    <property type="entry name" value="SSF"/>
    <property type="match status" value="1"/>
</dbReference>
<dbReference type="PROSITE" id="PS00456">
    <property type="entry name" value="NA_SOLUT_SYMP_1"/>
    <property type="match status" value="1"/>
</dbReference>
<dbReference type="PROSITE" id="PS00457">
    <property type="entry name" value="NA_SOLUT_SYMP_2"/>
    <property type="match status" value="1"/>
</dbReference>
<dbReference type="PROSITE" id="PS50283">
    <property type="entry name" value="NA_SOLUT_SYMP_3"/>
    <property type="match status" value="1"/>
</dbReference>
<evidence type="ECO:0000255" key="1"/>
<evidence type="ECO:0000269" key="2">
    <source>
    </source>
</evidence>
<evidence type="ECO:0000269" key="3">
    <source>
    </source>
</evidence>
<evidence type="ECO:0000305" key="4"/>
<evidence type="ECO:0000305" key="5">
    <source>
    </source>
</evidence>
<accession>P32705</accession>
<accession>Q2M6N7</accession>
<comment type="function">
    <text evidence="2">Transports acetate. Also able to transport glycolate.</text>
</comment>
<comment type="biophysicochemical properties">
    <kinetics>
        <KM evidence="2">5.4 uM for acetate</KM>
        <Vmax evidence="2">19.6 nmol/min/mg enzyme</Vmax>
    </kinetics>
</comment>
<comment type="subunit">
    <text evidence="3">Has been isolated from inner membrane preparations as a homodimer.</text>
</comment>
<comment type="subcellular location">
    <subcellularLocation>
        <location evidence="3">Cell inner membrane</location>
        <topology evidence="3">Multi-pass membrane protein</topology>
    </subcellularLocation>
</comment>
<comment type="miscellaneous">
    <text evidence="5">Although ActP belongs to the sodium:solute symporter family, the experiments did not allow to show that acetate transport depends on sodium. The inhibition of acetate transport by the uncoupler CCCP indicates that the driving force used by ActP is a transmembrane electrochemical potential. However, it does not allow to discriminate between hydrogen ion or sodium ion-coupled transporters (PubMed:14563880).</text>
</comment>
<comment type="similarity">
    <text evidence="4">Belongs to the sodium:solute symporter (SSF) (TC 2.A.21) family.</text>
</comment>